<keyword id="KW-0963">Cytoplasm</keyword>
<keyword id="KW-0489">Methyltransferase</keyword>
<keyword id="KW-1185">Reference proteome</keyword>
<keyword id="KW-0698">rRNA processing</keyword>
<keyword id="KW-0949">S-adenosyl-L-methionine</keyword>
<keyword id="KW-0808">Transferase</keyword>
<comment type="function">
    <text evidence="1">Specifically methylates the N7 position of guanine in position 527 of 16S rRNA.</text>
</comment>
<comment type="catalytic activity">
    <reaction evidence="1">
        <text>guanosine(527) in 16S rRNA + S-adenosyl-L-methionine = N(7)-methylguanosine(527) in 16S rRNA + S-adenosyl-L-homocysteine</text>
        <dbReference type="Rhea" id="RHEA:42732"/>
        <dbReference type="Rhea" id="RHEA-COMP:10209"/>
        <dbReference type="Rhea" id="RHEA-COMP:10210"/>
        <dbReference type="ChEBI" id="CHEBI:57856"/>
        <dbReference type="ChEBI" id="CHEBI:59789"/>
        <dbReference type="ChEBI" id="CHEBI:74269"/>
        <dbReference type="ChEBI" id="CHEBI:74480"/>
        <dbReference type="EC" id="2.1.1.170"/>
    </reaction>
</comment>
<comment type="subcellular location">
    <subcellularLocation>
        <location evidence="1">Cytoplasm</location>
    </subcellularLocation>
</comment>
<comment type="similarity">
    <text evidence="1">Belongs to the methyltransferase superfamily. RNA methyltransferase RsmG family.</text>
</comment>
<protein>
    <recommendedName>
        <fullName evidence="1">Ribosomal RNA small subunit methyltransferase G</fullName>
        <ecNumber evidence="1">2.1.1.170</ecNumber>
    </recommendedName>
    <alternativeName>
        <fullName evidence="1">16S rRNA 7-methylguanosine methyltransferase</fullName>
        <shortName evidence="1">16S rRNA m7G methyltransferase</shortName>
    </alternativeName>
    <alternativeName>
        <fullName>Glucose-inhibited division protein B</fullName>
    </alternativeName>
</protein>
<gene>
    <name evidence="1" type="primary">rsmG</name>
    <name type="synonym">gidB</name>
    <name type="ordered locus">CBU_1925</name>
</gene>
<sequence length="204" mass="22617">MTEKLKQGIDQLGLKVAETIQQSMLAFLAFLQKWNQAYNLTAITEIKSMITHHLLDSLSILPYLKGDKILDVGSGAGFPGIPLAFACPEKKFTLIDSKAKKTAFLLQAASRFKITNVTIIQERVGSYQPGFYFDTITCRALGSVREIMEQTNHLLRSGGQWLIMKGAYPEKELRGTDASAIVHVLNVPGLKAERHLVEVKNNKG</sequence>
<accession>P94614</accession>
<reference key="1">
    <citation type="submission" date="1997-01" db="EMBL/GenBank/DDBJ databases">
        <authorList>
            <person name="Willems H."/>
            <person name="Jaeger C."/>
        </authorList>
    </citation>
    <scope>NUCLEOTIDE SEQUENCE [GENOMIC DNA]</scope>
    <source>
        <strain>Nine Mile phase I</strain>
    </source>
</reference>
<reference key="2">
    <citation type="journal article" date="2003" name="Proc. Natl. Acad. Sci. U.S.A.">
        <title>Complete genome sequence of the Q-fever pathogen, Coxiella burnetii.</title>
        <authorList>
            <person name="Seshadri R."/>
            <person name="Paulsen I.T."/>
            <person name="Eisen J.A."/>
            <person name="Read T.D."/>
            <person name="Nelson K.E."/>
            <person name="Nelson W.C."/>
            <person name="Ward N.L."/>
            <person name="Tettelin H."/>
            <person name="Davidsen T.M."/>
            <person name="Beanan M.J."/>
            <person name="DeBoy R.T."/>
            <person name="Daugherty S.C."/>
            <person name="Brinkac L.M."/>
            <person name="Madupu R."/>
            <person name="Dodson R.J."/>
            <person name="Khouri H.M."/>
            <person name="Lee K.H."/>
            <person name="Carty H.A."/>
            <person name="Scanlan D."/>
            <person name="Heinzen R.A."/>
            <person name="Thompson H.A."/>
            <person name="Samuel J.E."/>
            <person name="Fraser C.M."/>
            <person name="Heidelberg J.F."/>
        </authorList>
    </citation>
    <scope>NUCLEOTIDE SEQUENCE [LARGE SCALE GENOMIC DNA]</scope>
    <source>
        <strain>RSA 493 / Nine Mile phase I</strain>
    </source>
</reference>
<name>RSMG_COXBU</name>
<evidence type="ECO:0000255" key="1">
    <source>
        <dbReference type="HAMAP-Rule" id="MF_00074"/>
    </source>
</evidence>
<proteinExistence type="inferred from homology"/>
<organism>
    <name type="scientific">Coxiella burnetii (strain RSA 493 / Nine Mile phase I)</name>
    <dbReference type="NCBI Taxonomy" id="227377"/>
    <lineage>
        <taxon>Bacteria</taxon>
        <taxon>Pseudomonadati</taxon>
        <taxon>Pseudomonadota</taxon>
        <taxon>Gammaproteobacteria</taxon>
        <taxon>Legionellales</taxon>
        <taxon>Coxiellaceae</taxon>
        <taxon>Coxiella</taxon>
    </lineage>
</organism>
<feature type="chain" id="PRO_0000184244" description="Ribosomal RNA small subunit methyltransferase G">
    <location>
        <begin position="1"/>
        <end position="204"/>
    </location>
</feature>
<feature type="binding site" evidence="1">
    <location>
        <position position="73"/>
    </location>
    <ligand>
        <name>S-adenosyl-L-methionine</name>
        <dbReference type="ChEBI" id="CHEBI:59789"/>
    </ligand>
</feature>
<feature type="binding site" evidence="1">
    <location>
        <position position="78"/>
    </location>
    <ligand>
        <name>S-adenosyl-L-methionine</name>
        <dbReference type="ChEBI" id="CHEBI:59789"/>
    </ligand>
</feature>
<feature type="binding site" evidence="1">
    <location>
        <position position="139"/>
    </location>
    <ligand>
        <name>S-adenosyl-L-methionine</name>
        <dbReference type="ChEBI" id="CHEBI:59789"/>
    </ligand>
</feature>
<dbReference type="EC" id="2.1.1.170" evidence="1"/>
<dbReference type="EMBL" id="Y10436">
    <property type="protein sequence ID" value="CAA71460.1"/>
    <property type="molecule type" value="Genomic_DNA"/>
</dbReference>
<dbReference type="EMBL" id="AE016828">
    <property type="protein sequence ID" value="AAO91416.1"/>
    <property type="molecule type" value="Genomic_DNA"/>
</dbReference>
<dbReference type="RefSeq" id="NP_820902.1">
    <property type="nucleotide sequence ID" value="NC_002971.3"/>
</dbReference>
<dbReference type="RefSeq" id="WP_010958542.1">
    <property type="nucleotide sequence ID" value="NC_002971.4"/>
</dbReference>
<dbReference type="SMR" id="P94614"/>
<dbReference type="STRING" id="227377.CBU_1925"/>
<dbReference type="DNASU" id="1209838"/>
<dbReference type="EnsemblBacteria" id="AAO91416">
    <property type="protein sequence ID" value="AAO91416"/>
    <property type="gene ID" value="CBU_1925"/>
</dbReference>
<dbReference type="GeneID" id="1209838"/>
<dbReference type="KEGG" id="cbu:CBU_1925"/>
<dbReference type="PATRIC" id="fig|227377.7.peg.1907"/>
<dbReference type="eggNOG" id="COG0357">
    <property type="taxonomic scope" value="Bacteria"/>
</dbReference>
<dbReference type="HOGENOM" id="CLU_065341_2_0_6"/>
<dbReference type="OrthoDB" id="9808773at2"/>
<dbReference type="Proteomes" id="UP000002671">
    <property type="component" value="Chromosome"/>
</dbReference>
<dbReference type="GO" id="GO:0005829">
    <property type="term" value="C:cytosol"/>
    <property type="evidence" value="ECO:0000318"/>
    <property type="project" value="GO_Central"/>
</dbReference>
<dbReference type="GO" id="GO:0070043">
    <property type="term" value="F:rRNA (guanine-N7-)-methyltransferase activity"/>
    <property type="evidence" value="ECO:0000318"/>
    <property type="project" value="GO_Central"/>
</dbReference>
<dbReference type="CDD" id="cd02440">
    <property type="entry name" value="AdoMet_MTases"/>
    <property type="match status" value="1"/>
</dbReference>
<dbReference type="FunFam" id="3.40.50.150:FF:000682">
    <property type="entry name" value="Ribosomal RNA small subunit methyltransferase G"/>
    <property type="match status" value="1"/>
</dbReference>
<dbReference type="Gene3D" id="3.40.50.150">
    <property type="entry name" value="Vaccinia Virus protein VP39"/>
    <property type="match status" value="1"/>
</dbReference>
<dbReference type="HAMAP" id="MF_00074">
    <property type="entry name" value="16SrRNA_methyltr_G"/>
    <property type="match status" value="1"/>
</dbReference>
<dbReference type="InterPro" id="IPR003682">
    <property type="entry name" value="rRNA_ssu_MeTfrase_G"/>
</dbReference>
<dbReference type="InterPro" id="IPR029063">
    <property type="entry name" value="SAM-dependent_MTases_sf"/>
</dbReference>
<dbReference type="NCBIfam" id="TIGR00138">
    <property type="entry name" value="rsmG_gidB"/>
    <property type="match status" value="1"/>
</dbReference>
<dbReference type="PANTHER" id="PTHR31760">
    <property type="entry name" value="S-ADENOSYL-L-METHIONINE-DEPENDENT METHYLTRANSFERASES SUPERFAMILY PROTEIN"/>
    <property type="match status" value="1"/>
</dbReference>
<dbReference type="PANTHER" id="PTHR31760:SF0">
    <property type="entry name" value="S-ADENOSYL-L-METHIONINE-DEPENDENT METHYLTRANSFERASES SUPERFAMILY PROTEIN"/>
    <property type="match status" value="1"/>
</dbReference>
<dbReference type="Pfam" id="PF02527">
    <property type="entry name" value="GidB"/>
    <property type="match status" value="1"/>
</dbReference>
<dbReference type="PIRSF" id="PIRSF003078">
    <property type="entry name" value="GidB"/>
    <property type="match status" value="1"/>
</dbReference>
<dbReference type="SUPFAM" id="SSF53335">
    <property type="entry name" value="S-adenosyl-L-methionine-dependent methyltransferases"/>
    <property type="match status" value="1"/>
</dbReference>